<dbReference type="EC" id="6.3.1.2"/>
<dbReference type="EMBL" id="AF462037">
    <property type="protein sequence ID" value="AAP23163.1"/>
    <property type="molecule type" value="mRNA"/>
</dbReference>
<dbReference type="SMR" id="Q86ZU6"/>
<dbReference type="OrthoDB" id="1936100at2759"/>
<dbReference type="BRENDA" id="6.3.1.2">
    <property type="organism ID" value="7423"/>
</dbReference>
<dbReference type="GO" id="GO:0005737">
    <property type="term" value="C:cytoplasm"/>
    <property type="evidence" value="ECO:0007669"/>
    <property type="project" value="UniProtKB-SubCell"/>
</dbReference>
<dbReference type="GO" id="GO:0005524">
    <property type="term" value="F:ATP binding"/>
    <property type="evidence" value="ECO:0007669"/>
    <property type="project" value="UniProtKB-KW"/>
</dbReference>
<dbReference type="GO" id="GO:0004356">
    <property type="term" value="F:glutamine synthetase activity"/>
    <property type="evidence" value="ECO:0007669"/>
    <property type="project" value="UniProtKB-EC"/>
</dbReference>
<dbReference type="GO" id="GO:0006542">
    <property type="term" value="P:glutamine biosynthetic process"/>
    <property type="evidence" value="ECO:0007669"/>
    <property type="project" value="InterPro"/>
</dbReference>
<dbReference type="FunFam" id="3.10.20.70:FF:000004">
    <property type="entry name" value="Glutamine synthetase"/>
    <property type="match status" value="1"/>
</dbReference>
<dbReference type="FunFam" id="3.30.590.10:FF:000004">
    <property type="entry name" value="Glutamine synthetase"/>
    <property type="match status" value="1"/>
</dbReference>
<dbReference type="Gene3D" id="3.10.20.70">
    <property type="entry name" value="Glutamine synthetase, N-terminal domain"/>
    <property type="match status" value="1"/>
</dbReference>
<dbReference type="Gene3D" id="3.30.590.10">
    <property type="entry name" value="Glutamine synthetase/guanido kinase, catalytic domain"/>
    <property type="match status" value="1"/>
</dbReference>
<dbReference type="InterPro" id="IPR008147">
    <property type="entry name" value="Gln_synt_N"/>
</dbReference>
<dbReference type="InterPro" id="IPR036651">
    <property type="entry name" value="Gln_synt_N_sf"/>
</dbReference>
<dbReference type="InterPro" id="IPR014746">
    <property type="entry name" value="Gln_synth/guanido_kin_cat_dom"/>
</dbReference>
<dbReference type="InterPro" id="IPR008146">
    <property type="entry name" value="Gln_synth_cat_dom"/>
</dbReference>
<dbReference type="InterPro" id="IPR027303">
    <property type="entry name" value="Gln_synth_gly_rich_site"/>
</dbReference>
<dbReference type="InterPro" id="IPR027302">
    <property type="entry name" value="Gln_synth_N_conserv_site"/>
</dbReference>
<dbReference type="InterPro" id="IPR050292">
    <property type="entry name" value="Glutamine_Synthetase"/>
</dbReference>
<dbReference type="PANTHER" id="PTHR20852">
    <property type="entry name" value="GLUTAMINE SYNTHETASE"/>
    <property type="match status" value="1"/>
</dbReference>
<dbReference type="PANTHER" id="PTHR20852:SF57">
    <property type="entry name" value="GLUTAMINE SYNTHETASE 2 CYTOPLASMIC"/>
    <property type="match status" value="1"/>
</dbReference>
<dbReference type="Pfam" id="PF00120">
    <property type="entry name" value="Gln-synt_C"/>
    <property type="match status" value="1"/>
</dbReference>
<dbReference type="Pfam" id="PF03951">
    <property type="entry name" value="Gln-synt_N"/>
    <property type="match status" value="1"/>
</dbReference>
<dbReference type="SMART" id="SM01230">
    <property type="entry name" value="Gln-synt_C"/>
    <property type="match status" value="1"/>
</dbReference>
<dbReference type="SUPFAM" id="SSF54368">
    <property type="entry name" value="Glutamine synthetase, N-terminal domain"/>
    <property type="match status" value="1"/>
</dbReference>
<dbReference type="SUPFAM" id="SSF55931">
    <property type="entry name" value="Glutamine synthetase/guanido kinase"/>
    <property type="match status" value="1"/>
</dbReference>
<dbReference type="PROSITE" id="PS00180">
    <property type="entry name" value="GLNA_1"/>
    <property type="match status" value="1"/>
</dbReference>
<dbReference type="PROSITE" id="PS00181">
    <property type="entry name" value="GLNA_ATP"/>
    <property type="match status" value="1"/>
</dbReference>
<dbReference type="PROSITE" id="PS51986">
    <property type="entry name" value="GS_BETA_GRASP"/>
    <property type="match status" value="1"/>
</dbReference>
<dbReference type="PROSITE" id="PS51987">
    <property type="entry name" value="GS_CATALYTIC"/>
    <property type="match status" value="1"/>
</dbReference>
<proteinExistence type="evidence at transcript level"/>
<keyword id="KW-0067">ATP-binding</keyword>
<keyword id="KW-0963">Cytoplasm</keyword>
<keyword id="KW-0436">Ligase</keyword>
<keyword id="KW-0547">Nucleotide-binding</keyword>
<organism>
    <name type="scientific">Tuber borchii</name>
    <name type="common">White truffle</name>
    <dbReference type="NCBI Taxonomy" id="42251"/>
    <lineage>
        <taxon>Eukaryota</taxon>
        <taxon>Fungi</taxon>
        <taxon>Dikarya</taxon>
        <taxon>Ascomycota</taxon>
        <taxon>Pezizomycotina</taxon>
        <taxon>Pezizomycetes</taxon>
        <taxon>Pezizales</taxon>
        <taxon>Tuberaceae</taxon>
        <taxon>Tuber</taxon>
    </lineage>
</organism>
<name>GLNA_TUBBO</name>
<protein>
    <recommendedName>
        <fullName>Glutamine synthetase</fullName>
        <shortName>GS</shortName>
        <ecNumber>6.3.1.2</ecNumber>
    </recommendedName>
    <alternativeName>
        <fullName>Glutamate--ammonia ligase</fullName>
    </alternativeName>
</protein>
<sequence>MSENSTIVSNTANLVKFLNLDQKGSILAEYIWIDGANGVRSKTKTLFKKPSSVEDLPEWNFDGSSTGQAPGEDSDIYLRPVAIFPDPFRMGDNILVLAECWNADGSPNKFNHRHECAKIMEAHKDQKPWFGLEQEYTLFDLYGNPYGWPKGGFPGPQGPYYCGVGTGKVYCRDIVEAHYKACLFAGIKISGINAEVLPSQWEFQVGPCVGIEMGDHLWISRYLLHRVAEEFGVKISFHPKPIPGDWNGSGLHTNVSTQAMRDEGGMKAIEEAIQKLSTRHAEHIAVYGDDNTLRLTGRHETGNIDAFSYGVADRGSSIRIPRSCAKEGKGYFEDRRPASNACPYQITGIMMETICGGI</sequence>
<feature type="chain" id="PRO_0000153164" description="Glutamine synthetase">
    <location>
        <begin position="1"/>
        <end position="358"/>
    </location>
</feature>
<feature type="domain" description="GS beta-grasp" evidence="2">
    <location>
        <begin position="26"/>
        <end position="105"/>
    </location>
</feature>
<feature type="domain" description="GS catalytic" evidence="3">
    <location>
        <begin position="112"/>
        <end position="358"/>
    </location>
</feature>
<accession>Q86ZU6</accession>
<evidence type="ECO:0000250" key="1"/>
<evidence type="ECO:0000255" key="2">
    <source>
        <dbReference type="PROSITE-ProRule" id="PRU01330"/>
    </source>
</evidence>
<evidence type="ECO:0000255" key="3">
    <source>
        <dbReference type="PROSITE-ProRule" id="PRU01331"/>
    </source>
</evidence>
<evidence type="ECO:0000305" key="4"/>
<comment type="catalytic activity">
    <reaction>
        <text>L-glutamate + NH4(+) + ATP = L-glutamine + ADP + phosphate + H(+)</text>
        <dbReference type="Rhea" id="RHEA:16169"/>
        <dbReference type="ChEBI" id="CHEBI:15378"/>
        <dbReference type="ChEBI" id="CHEBI:28938"/>
        <dbReference type="ChEBI" id="CHEBI:29985"/>
        <dbReference type="ChEBI" id="CHEBI:30616"/>
        <dbReference type="ChEBI" id="CHEBI:43474"/>
        <dbReference type="ChEBI" id="CHEBI:58359"/>
        <dbReference type="ChEBI" id="CHEBI:456216"/>
        <dbReference type="EC" id="6.3.1.2"/>
    </reaction>
</comment>
<comment type="subunit">
    <text evidence="1">Homooctamer.</text>
</comment>
<comment type="subcellular location">
    <subcellularLocation>
        <location evidence="1">Cytoplasm</location>
    </subcellularLocation>
</comment>
<comment type="similarity">
    <text evidence="4">Belongs to the glutamine synthetase family.</text>
</comment>
<reference key="1">
    <citation type="journal article" date="2003" name="Biochem. J.">
        <title>Distinctive properties and expression profiles of glutamine synthetase from a plant symbiotic fungus.</title>
        <authorList>
            <person name="Montanini B."/>
            <person name="Betti M."/>
            <person name="Marquez A.J."/>
            <person name="Balestrini R."/>
            <person name="Bonfante P."/>
            <person name="Ottonello S."/>
        </authorList>
    </citation>
    <scope>NUCLEOTIDE SEQUENCE [MRNA]</scope>
</reference>
<gene>
    <name type="primary">GLN1</name>
</gene>